<reference key="1">
    <citation type="submission" date="2007-02" db="EMBL/GenBank/DDBJ databases">
        <title>Complete sequence of chromosome of Shewanella baltica OS155.</title>
        <authorList>
            <consortium name="US DOE Joint Genome Institute"/>
            <person name="Copeland A."/>
            <person name="Lucas S."/>
            <person name="Lapidus A."/>
            <person name="Barry K."/>
            <person name="Detter J.C."/>
            <person name="Glavina del Rio T."/>
            <person name="Hammon N."/>
            <person name="Israni S."/>
            <person name="Dalin E."/>
            <person name="Tice H."/>
            <person name="Pitluck S."/>
            <person name="Sims D.R."/>
            <person name="Brettin T."/>
            <person name="Bruce D."/>
            <person name="Han C."/>
            <person name="Tapia R."/>
            <person name="Brainard J."/>
            <person name="Schmutz J."/>
            <person name="Larimer F."/>
            <person name="Land M."/>
            <person name="Hauser L."/>
            <person name="Kyrpides N."/>
            <person name="Mikhailova N."/>
            <person name="Brettar I."/>
            <person name="Klappenbach J."/>
            <person name="Konstantinidis K."/>
            <person name="Rodrigues J."/>
            <person name="Tiedje J."/>
            <person name="Richardson P."/>
        </authorList>
    </citation>
    <scope>NUCLEOTIDE SEQUENCE [LARGE SCALE GENOMIC DNA]</scope>
    <source>
        <strain>OS155 / ATCC BAA-1091</strain>
    </source>
</reference>
<protein>
    <recommendedName>
        <fullName evidence="1">Probable protein kinase UbiB</fullName>
        <ecNumber evidence="1">2.7.-.-</ecNumber>
    </recommendedName>
    <alternativeName>
        <fullName evidence="1">Ubiquinone biosynthesis protein UbiB</fullName>
    </alternativeName>
</protein>
<organism>
    <name type="scientific">Shewanella baltica (strain OS155 / ATCC BAA-1091)</name>
    <dbReference type="NCBI Taxonomy" id="325240"/>
    <lineage>
        <taxon>Bacteria</taxon>
        <taxon>Pseudomonadati</taxon>
        <taxon>Pseudomonadota</taxon>
        <taxon>Gammaproteobacteria</taxon>
        <taxon>Alteromonadales</taxon>
        <taxon>Shewanellaceae</taxon>
        <taxon>Shewanella</taxon>
    </lineage>
</organism>
<name>UBIB_SHEB5</name>
<accession>A3D9F4</accession>
<gene>
    <name evidence="1" type="primary">ubiB</name>
    <name type="ordered locus">Sbal_3897</name>
</gene>
<proteinExistence type="inferred from homology"/>
<keyword id="KW-0067">ATP-binding</keyword>
<keyword id="KW-0997">Cell inner membrane</keyword>
<keyword id="KW-1003">Cell membrane</keyword>
<keyword id="KW-0418">Kinase</keyword>
<keyword id="KW-0472">Membrane</keyword>
<keyword id="KW-0547">Nucleotide-binding</keyword>
<keyword id="KW-1185">Reference proteome</keyword>
<keyword id="KW-0808">Transferase</keyword>
<keyword id="KW-0812">Transmembrane</keyword>
<keyword id="KW-1133">Transmembrane helix</keyword>
<keyword id="KW-0831">Ubiquinone biosynthesis</keyword>
<dbReference type="EC" id="2.7.-.-" evidence="1"/>
<dbReference type="EMBL" id="CP000563">
    <property type="protein sequence ID" value="ABN63367.1"/>
    <property type="molecule type" value="Genomic_DNA"/>
</dbReference>
<dbReference type="RefSeq" id="WP_011847989.1">
    <property type="nucleotide sequence ID" value="NC_009052.1"/>
</dbReference>
<dbReference type="SMR" id="A3D9F4"/>
<dbReference type="STRING" id="325240.Sbal_3897"/>
<dbReference type="KEGG" id="sbl:Sbal_3897"/>
<dbReference type="HOGENOM" id="CLU_006533_0_0_6"/>
<dbReference type="OrthoDB" id="9795390at2"/>
<dbReference type="UniPathway" id="UPA00232"/>
<dbReference type="Proteomes" id="UP000001557">
    <property type="component" value="Chromosome"/>
</dbReference>
<dbReference type="GO" id="GO:0005886">
    <property type="term" value="C:plasma membrane"/>
    <property type="evidence" value="ECO:0007669"/>
    <property type="project" value="UniProtKB-SubCell"/>
</dbReference>
<dbReference type="GO" id="GO:0005524">
    <property type="term" value="F:ATP binding"/>
    <property type="evidence" value="ECO:0007669"/>
    <property type="project" value="UniProtKB-KW"/>
</dbReference>
<dbReference type="GO" id="GO:0004672">
    <property type="term" value="F:protein kinase activity"/>
    <property type="evidence" value="ECO:0007669"/>
    <property type="project" value="UniProtKB-UniRule"/>
</dbReference>
<dbReference type="GO" id="GO:0010795">
    <property type="term" value="P:regulation of ubiquinone biosynthetic process"/>
    <property type="evidence" value="ECO:0007669"/>
    <property type="project" value="UniProtKB-UniRule"/>
</dbReference>
<dbReference type="GO" id="GO:0006744">
    <property type="term" value="P:ubiquinone biosynthetic process"/>
    <property type="evidence" value="ECO:0007669"/>
    <property type="project" value="UniProtKB-UniPathway"/>
</dbReference>
<dbReference type="CDD" id="cd13972">
    <property type="entry name" value="UbiB"/>
    <property type="match status" value="1"/>
</dbReference>
<dbReference type="HAMAP" id="MF_00414">
    <property type="entry name" value="UbiB"/>
    <property type="match status" value="1"/>
</dbReference>
<dbReference type="InterPro" id="IPR004147">
    <property type="entry name" value="ABC1_dom"/>
</dbReference>
<dbReference type="InterPro" id="IPR011009">
    <property type="entry name" value="Kinase-like_dom_sf"/>
</dbReference>
<dbReference type="InterPro" id="IPR010232">
    <property type="entry name" value="UbiB"/>
</dbReference>
<dbReference type="InterPro" id="IPR045308">
    <property type="entry name" value="UbiB_bact"/>
</dbReference>
<dbReference type="InterPro" id="IPR050154">
    <property type="entry name" value="UbiB_kinase"/>
</dbReference>
<dbReference type="NCBIfam" id="NF003404">
    <property type="entry name" value="PRK04750.1"/>
    <property type="match status" value="1"/>
</dbReference>
<dbReference type="NCBIfam" id="TIGR01982">
    <property type="entry name" value="UbiB"/>
    <property type="match status" value="1"/>
</dbReference>
<dbReference type="PANTHER" id="PTHR10566">
    <property type="entry name" value="CHAPERONE-ACTIVITY OF BC1 COMPLEX CABC1 -RELATED"/>
    <property type="match status" value="1"/>
</dbReference>
<dbReference type="PANTHER" id="PTHR10566:SF113">
    <property type="entry name" value="PROTEIN ACTIVITY OF BC1 COMPLEX KINASE 7, CHLOROPLASTIC"/>
    <property type="match status" value="1"/>
</dbReference>
<dbReference type="Pfam" id="PF03109">
    <property type="entry name" value="ABC1"/>
    <property type="match status" value="1"/>
</dbReference>
<dbReference type="SUPFAM" id="SSF56112">
    <property type="entry name" value="Protein kinase-like (PK-like)"/>
    <property type="match status" value="1"/>
</dbReference>
<feature type="chain" id="PRO_1000050056" description="Probable protein kinase UbiB">
    <location>
        <begin position="1"/>
        <end position="549"/>
    </location>
</feature>
<feature type="transmembrane region" description="Helical" evidence="1">
    <location>
        <begin position="496"/>
        <end position="516"/>
    </location>
</feature>
<feature type="transmembrane region" description="Helical" evidence="1">
    <location>
        <begin position="520"/>
        <end position="540"/>
    </location>
</feature>
<feature type="domain" description="Protein kinase" evidence="1">
    <location>
        <begin position="123"/>
        <end position="501"/>
    </location>
</feature>
<feature type="active site" description="Proton acceptor" evidence="1">
    <location>
        <position position="287"/>
    </location>
</feature>
<feature type="binding site" evidence="1">
    <location>
        <begin position="129"/>
        <end position="137"/>
    </location>
    <ligand>
        <name>ATP</name>
        <dbReference type="ChEBI" id="CHEBI:30616"/>
    </ligand>
</feature>
<feature type="binding site" evidence="1">
    <location>
        <position position="152"/>
    </location>
    <ligand>
        <name>ATP</name>
        <dbReference type="ChEBI" id="CHEBI:30616"/>
    </ligand>
</feature>
<comment type="function">
    <text evidence="1">Is probably a protein kinase regulator of UbiI activity which is involved in aerobic coenzyme Q (ubiquinone) biosynthesis.</text>
</comment>
<comment type="pathway">
    <text>Cofactor biosynthesis; ubiquinone biosynthesis [regulation].</text>
</comment>
<comment type="subcellular location">
    <subcellularLocation>
        <location evidence="1">Cell inner membrane</location>
        <topology evidence="1">Multi-pass membrane protein</topology>
    </subcellularLocation>
</comment>
<comment type="similarity">
    <text evidence="1">Belongs to the ABC1 family. UbiB subfamily.</text>
</comment>
<sequence length="549" mass="63376">MTLASIRRGYHVIKTLLQYGLDDVLPPKMTPWYFKLARNSLFWIRNKHKNKPGGERLKLAMQELGPVYIKLGQMLSTRRDLLSDEWASELAMLQDKVPPFDGALARQAIEAELKAPIESLFDDFNEIPLASASISQVHTATLKSNGKDVVLKVLRPNVETKIQADLQLMSQTAKLIEYLLGEGNRLRPAEVIEDYRVTILGELNLKLEALNAVKLRNNFLDSDALYVPYVYEEFCYPRLMVMERIYGISVSDIAALKAQGTNFKLLAERGVELFFTQVFRDNFFHADMHPGNIFISRDHPENPYYIGLDCGIMGTLSEVDKRYLAENFLAFFNRDYHRIAQLYIESGWVSEKTDLQAFEQAIKVVCEPMFNKPLDEISFGHVLLELFRTARHFDIVVQPQLVLLEKTLLYIEGLGRQLYPQLDLWQTAKPFLEQWMADQVGPKAMFKKVSTKLPYWADKLPEFPELIYDNLKLGRKLLSSQQQMLDKYLKYQQQAHKSNYLLITSAVLLICGTLLINRDATLWTPYVCLVSGIILWFVGWRSRPKNRKF</sequence>
<evidence type="ECO:0000255" key="1">
    <source>
        <dbReference type="HAMAP-Rule" id="MF_00414"/>
    </source>
</evidence>